<evidence type="ECO:0000256" key="1">
    <source>
        <dbReference type="SAM" id="MobiDB-lite"/>
    </source>
</evidence>
<evidence type="ECO:0000269" key="2">
    <source>
    </source>
</evidence>
<evidence type="ECO:0000269" key="3">
    <source>
    </source>
</evidence>
<evidence type="ECO:0000305" key="4"/>
<comment type="function">
    <text>Acts as a component of the CCR4-NOT core complex, which in the nucleus seems to be a general transcription factor, and in the cytoplasm the major mRNA deadenylase involved in mRNA turnover.</text>
</comment>
<comment type="subunit">
    <text evidence="2">Subunit of the 1.0 MDa CCR4-NOT core complex that contains CCR4, CAF1, NOT1, NOT2, NOT3, NOT4, NOT5, CAF40 and CAF130. In the complex interacts with NOT1. The core complex probably is part of a less characterized 1.9 MDa CCR4-NOT complex.</text>
</comment>
<comment type="interaction">
    <interactant intactId="EBI-28306">
        <id>P53829</id>
    </interactant>
    <interactant intactId="EBI-4396">
        <id>P31384</id>
        <label>CCR4</label>
    </interactant>
    <organismsDiffer>false</organismsDiffer>
    <experiments>9</experiments>
</comment>
<comment type="interaction">
    <interactant intactId="EBI-28306">
        <id>P53829</id>
    </interactant>
    <interactant intactId="EBI-12153">
        <id>P06100</id>
        <label>CDC36</label>
    </interactant>
    <organismsDiffer>false</organismsDiffer>
    <experiments>3</experiments>
</comment>
<comment type="interaction">
    <interactant intactId="EBI-28306">
        <id>P53829</id>
    </interactant>
    <interactant intactId="EBI-12139">
        <id>P25655</id>
        <label>CDC39</label>
    </interactant>
    <organismsDiffer>false</organismsDiffer>
    <experiments>11</experiments>
</comment>
<comment type="interaction">
    <interactant intactId="EBI-28306">
        <id>P53829</id>
    </interactant>
    <interactant intactId="EBI-12174">
        <id>P34909</id>
        <label>MOT2</label>
    </interactant>
    <organismsDiffer>false</organismsDiffer>
    <experiments>6</experiments>
</comment>
<comment type="interaction">
    <interactant intactId="EBI-28306">
        <id>P53829</id>
    </interactant>
    <interactant intactId="EBI-12165">
        <id>P06102</id>
        <label>NOT3</label>
    </interactant>
    <organismsDiffer>false</organismsDiffer>
    <experiments>3</experiments>
</comment>
<comment type="interaction">
    <interactant intactId="EBI-28306">
        <id>P53829</id>
    </interactant>
    <interactant intactId="EBI-12184">
        <id>Q12514</id>
        <label>NOT5</label>
    </interactant>
    <organismsDiffer>false</organismsDiffer>
    <experiments>4</experiments>
</comment>
<comment type="interaction">
    <interactant intactId="EBI-28306">
        <id>P53829</id>
    </interactant>
    <interactant intactId="EBI-28788">
        <id>P53935</id>
        <label>NST1</label>
    </interactant>
    <organismsDiffer>false</organismsDiffer>
    <experiments>3</experiments>
</comment>
<comment type="interaction">
    <interactant intactId="EBI-28306">
        <id>P53829</id>
    </interactant>
    <interactant intactId="EBI-13629">
        <id>P39008</id>
        <label>POP2</label>
    </interactant>
    <organismsDiffer>false</organismsDiffer>
    <experiments>9</experiments>
</comment>
<comment type="subcellular location">
    <subcellularLocation>
        <location evidence="4">Cytoplasm</location>
    </subcellularLocation>
    <subcellularLocation>
        <location evidence="4">Nucleus</location>
    </subcellularLocation>
</comment>
<comment type="miscellaneous">
    <text evidence="3">Present with 18800 molecules/cell in log phase SD medium.</text>
</comment>
<comment type="similarity">
    <text evidence="4">Belongs to the CNOT9 family.</text>
</comment>
<keyword id="KW-0002">3D-structure</keyword>
<keyword id="KW-0010">Activator</keyword>
<keyword id="KW-0963">Cytoplasm</keyword>
<keyword id="KW-0539">Nucleus</keyword>
<keyword id="KW-1185">Reference proteome</keyword>
<keyword id="KW-0678">Repressor</keyword>
<keyword id="KW-0804">Transcription</keyword>
<keyword id="KW-0805">Transcription regulation</keyword>
<protein>
    <recommendedName>
        <fullName>Protein CAF40</fullName>
    </recommendedName>
    <alternativeName>
        <fullName>40 kDa CCR4-associated factor</fullName>
    </alternativeName>
</protein>
<sequence length="373" mass="41155">MFSAQKPIYGNGAGVNMGGGGPSTNNPGSMSMPGVPTSMGPGMNQQIPSGGPMLMGNTPNNNNSNENGENNGNNGNNGGNDANATRNNPNMVNNRGAVHALDDPNVYHWICQLTYGPQKEQALLELGRKREQFDDLAVVLWSSFGVMTSLLNEIISVYPMLQPQMLSNNLSNRVCNALVLLQCVASHPETKHLFLQAHIPLFLFPFLNTTSRQRTFEYLRLTSLGVIGALVKNDSQDVITFLLRTDIVPLCLRIMESSSELSKTVAIFILQKILLDDVGLQYICATLERFYAVTNVLKDMVEHLTVSTPPGRLLKHIIRCYLRLSDDLEARRLLKIVLPAKLRDNTFTEVLRDDVGSKRCLAQLLLTLNEETS</sequence>
<proteinExistence type="evidence at protein level"/>
<name>CAF40_YEAST</name>
<dbReference type="EMBL" id="Z71564">
    <property type="protein sequence ID" value="CAA96205.1"/>
    <property type="molecule type" value="Genomic_DNA"/>
</dbReference>
<dbReference type="EMBL" id="BK006947">
    <property type="protein sequence ID" value="DAA10271.1"/>
    <property type="molecule type" value="Genomic_DNA"/>
</dbReference>
<dbReference type="PIR" id="S63262">
    <property type="entry name" value="S63262"/>
</dbReference>
<dbReference type="RefSeq" id="NP_014111.1">
    <property type="nucleotide sequence ID" value="NM_001183126.1"/>
</dbReference>
<dbReference type="PDB" id="4CV5">
    <property type="method" value="X-ray"/>
    <property type="resolution" value="3.81 A"/>
    <property type="chains" value="B/D=54-373"/>
</dbReference>
<dbReference type="PDBsum" id="4CV5"/>
<dbReference type="SMR" id="P53829"/>
<dbReference type="BioGRID" id="35549">
    <property type="interactions" value="255"/>
</dbReference>
<dbReference type="ComplexPortal" id="CPX-1800">
    <property type="entry name" value="CCR4-NOT mRNA deadenylase complex"/>
</dbReference>
<dbReference type="DIP" id="DIP-1995N"/>
<dbReference type="FunCoup" id="P53829">
    <property type="interactions" value="1064"/>
</dbReference>
<dbReference type="IntAct" id="P53829">
    <property type="interactions" value="46"/>
</dbReference>
<dbReference type="MINT" id="P53829"/>
<dbReference type="STRING" id="4932.YNL288W"/>
<dbReference type="PaxDb" id="4932-YNL288W"/>
<dbReference type="PeptideAtlas" id="P53829"/>
<dbReference type="EnsemblFungi" id="YNL288W_mRNA">
    <property type="protein sequence ID" value="YNL288W"/>
    <property type="gene ID" value="YNL288W"/>
</dbReference>
<dbReference type="GeneID" id="855428"/>
<dbReference type="KEGG" id="sce:YNL288W"/>
<dbReference type="AGR" id="SGD:S000005232"/>
<dbReference type="SGD" id="S000005232">
    <property type="gene designation" value="CAF40"/>
</dbReference>
<dbReference type="VEuPathDB" id="FungiDB:YNL288W"/>
<dbReference type="eggNOG" id="KOG3036">
    <property type="taxonomic scope" value="Eukaryota"/>
</dbReference>
<dbReference type="GeneTree" id="ENSGT00390000001225"/>
<dbReference type="HOGENOM" id="CLU_039962_1_0_1"/>
<dbReference type="InParanoid" id="P53829"/>
<dbReference type="OMA" id="IFIVQKF"/>
<dbReference type="OrthoDB" id="1183224at2759"/>
<dbReference type="BioCyc" id="YEAST:G3O-33278-MONOMER"/>
<dbReference type="BioGRID-ORCS" id="855428">
    <property type="hits" value="2 hits in 10 CRISPR screens"/>
</dbReference>
<dbReference type="CD-CODE" id="A777E0F8">
    <property type="entry name" value="P-body"/>
</dbReference>
<dbReference type="CD-CODE" id="E03F929F">
    <property type="entry name" value="Stress granule"/>
</dbReference>
<dbReference type="EvolutionaryTrace" id="P53829"/>
<dbReference type="PRO" id="PR:P53829"/>
<dbReference type="Proteomes" id="UP000002311">
    <property type="component" value="Chromosome XIV"/>
</dbReference>
<dbReference type="RNAct" id="P53829">
    <property type="molecule type" value="protein"/>
</dbReference>
<dbReference type="GO" id="GO:0030015">
    <property type="term" value="C:CCR4-NOT core complex"/>
    <property type="evidence" value="ECO:0000353"/>
    <property type="project" value="SGD"/>
</dbReference>
<dbReference type="GO" id="GO:0005634">
    <property type="term" value="C:nucleus"/>
    <property type="evidence" value="ECO:0007669"/>
    <property type="project" value="UniProtKB-SubCell"/>
</dbReference>
<dbReference type="GO" id="GO:0000932">
    <property type="term" value="C:P-body"/>
    <property type="evidence" value="ECO:0000318"/>
    <property type="project" value="GO_Central"/>
</dbReference>
<dbReference type="GO" id="GO:0017148">
    <property type="term" value="P:negative regulation of translation"/>
    <property type="evidence" value="ECO:0000318"/>
    <property type="project" value="GO_Central"/>
</dbReference>
<dbReference type="GO" id="GO:0000289">
    <property type="term" value="P:nuclear-transcribed mRNA poly(A) tail shortening"/>
    <property type="evidence" value="ECO:0000303"/>
    <property type="project" value="ComplexPortal"/>
</dbReference>
<dbReference type="GO" id="GO:0032968">
    <property type="term" value="P:positive regulation of transcription elongation by RNA polymerase II"/>
    <property type="evidence" value="ECO:0000314"/>
    <property type="project" value="ComplexPortal"/>
</dbReference>
<dbReference type="FunFam" id="1.25.10.10:FF:000160">
    <property type="entry name" value="Cell differentiation protein"/>
    <property type="match status" value="1"/>
</dbReference>
<dbReference type="Gene3D" id="1.25.10.10">
    <property type="entry name" value="Leucine-rich Repeat Variant"/>
    <property type="match status" value="1"/>
</dbReference>
<dbReference type="InterPro" id="IPR011989">
    <property type="entry name" value="ARM-like"/>
</dbReference>
<dbReference type="InterPro" id="IPR016024">
    <property type="entry name" value="ARM-type_fold"/>
</dbReference>
<dbReference type="InterPro" id="IPR007216">
    <property type="entry name" value="CNOT9"/>
</dbReference>
<dbReference type="PANTHER" id="PTHR12262">
    <property type="entry name" value="CCR4-NOT TRANSCRIPTION COMPLEX SUBUNIT 9"/>
    <property type="match status" value="1"/>
</dbReference>
<dbReference type="Pfam" id="PF04078">
    <property type="entry name" value="Rcd1"/>
    <property type="match status" value="1"/>
</dbReference>
<dbReference type="SUPFAM" id="SSF48371">
    <property type="entry name" value="ARM repeat"/>
    <property type="match status" value="1"/>
</dbReference>
<organism>
    <name type="scientific">Saccharomyces cerevisiae (strain ATCC 204508 / S288c)</name>
    <name type="common">Baker's yeast</name>
    <dbReference type="NCBI Taxonomy" id="559292"/>
    <lineage>
        <taxon>Eukaryota</taxon>
        <taxon>Fungi</taxon>
        <taxon>Dikarya</taxon>
        <taxon>Ascomycota</taxon>
        <taxon>Saccharomycotina</taxon>
        <taxon>Saccharomycetes</taxon>
        <taxon>Saccharomycetales</taxon>
        <taxon>Saccharomycetaceae</taxon>
        <taxon>Saccharomyces</taxon>
    </lineage>
</organism>
<accession>P53829</accession>
<accession>D6W0Q5</accession>
<reference key="1">
    <citation type="journal article" date="1997" name="Nature">
        <title>The nucleotide sequence of Saccharomyces cerevisiae chromosome XIV and its evolutionary implications.</title>
        <authorList>
            <person name="Philippsen P."/>
            <person name="Kleine K."/>
            <person name="Poehlmann R."/>
            <person name="Duesterhoeft A."/>
            <person name="Hamberg K."/>
            <person name="Hegemann J.H."/>
            <person name="Obermaier B."/>
            <person name="Urrestarazu L.A."/>
            <person name="Aert R."/>
            <person name="Albermann K."/>
            <person name="Altmann R."/>
            <person name="Andre B."/>
            <person name="Baladron V."/>
            <person name="Ballesta J.P.G."/>
            <person name="Becam A.-M."/>
            <person name="Beinhauer J.D."/>
            <person name="Boskovic J."/>
            <person name="Buitrago M.J."/>
            <person name="Bussereau F."/>
            <person name="Coster F."/>
            <person name="Crouzet M."/>
            <person name="D'Angelo M."/>
            <person name="Dal Pero F."/>
            <person name="De Antoni A."/>
            <person name="del Rey F."/>
            <person name="Doignon F."/>
            <person name="Domdey H."/>
            <person name="Dubois E."/>
            <person name="Fiedler T.A."/>
            <person name="Fleig U."/>
            <person name="Floeth M."/>
            <person name="Fritz C."/>
            <person name="Gaillardin C."/>
            <person name="Garcia-Cantalejo J.M."/>
            <person name="Glansdorff N."/>
            <person name="Goffeau A."/>
            <person name="Gueldener U."/>
            <person name="Herbert C.J."/>
            <person name="Heumann K."/>
            <person name="Heuss-Neitzel D."/>
            <person name="Hilbert H."/>
            <person name="Hinni K."/>
            <person name="Iraqui Houssaini I."/>
            <person name="Jacquet M."/>
            <person name="Jimenez A."/>
            <person name="Jonniaux J.-L."/>
            <person name="Karpfinger-Hartl L."/>
            <person name="Lanfranchi G."/>
            <person name="Lepingle A."/>
            <person name="Levesque H."/>
            <person name="Lyck R."/>
            <person name="Maftahi M."/>
            <person name="Mallet L."/>
            <person name="Maurer C.T.C."/>
            <person name="Messenguy F."/>
            <person name="Mewes H.-W."/>
            <person name="Moestl D."/>
            <person name="Nasr F."/>
            <person name="Nicaud J.-M."/>
            <person name="Niedenthal R.K."/>
            <person name="Pandolfo D."/>
            <person name="Pierard A."/>
            <person name="Piravandi E."/>
            <person name="Planta R.J."/>
            <person name="Pohl T.M."/>
            <person name="Purnelle B."/>
            <person name="Rebischung C."/>
            <person name="Remacha M.A."/>
            <person name="Revuelta J.L."/>
            <person name="Rinke M."/>
            <person name="Saiz J.E."/>
            <person name="Sartorello F."/>
            <person name="Scherens B."/>
            <person name="Sen-Gupta M."/>
            <person name="Soler-Mira A."/>
            <person name="Urbanus J.H.M."/>
            <person name="Valle G."/>
            <person name="Van Dyck L."/>
            <person name="Verhasselt P."/>
            <person name="Vierendeels F."/>
            <person name="Vissers S."/>
            <person name="Voet M."/>
            <person name="Volckaert G."/>
            <person name="Wach A."/>
            <person name="Wambutt R."/>
            <person name="Wedler H."/>
            <person name="Zollner A."/>
            <person name="Hani J."/>
        </authorList>
    </citation>
    <scope>NUCLEOTIDE SEQUENCE [LARGE SCALE GENOMIC DNA]</scope>
    <source>
        <strain>ATCC 204508 / S288c</strain>
    </source>
</reference>
<reference key="2">
    <citation type="journal article" date="2014" name="G3 (Bethesda)">
        <title>The reference genome sequence of Saccharomyces cerevisiae: Then and now.</title>
        <authorList>
            <person name="Engel S.R."/>
            <person name="Dietrich F.S."/>
            <person name="Fisk D.G."/>
            <person name="Binkley G."/>
            <person name="Balakrishnan R."/>
            <person name="Costanzo M.C."/>
            <person name="Dwight S.S."/>
            <person name="Hitz B.C."/>
            <person name="Karra K."/>
            <person name="Nash R.S."/>
            <person name="Weng S."/>
            <person name="Wong E.D."/>
            <person name="Lloyd P."/>
            <person name="Skrzypek M.S."/>
            <person name="Miyasato S.R."/>
            <person name="Simison M."/>
            <person name="Cherry J.M."/>
        </authorList>
    </citation>
    <scope>GENOME REANNOTATION</scope>
    <source>
        <strain>ATCC 204508 / S288c</strain>
    </source>
</reference>
<reference key="3">
    <citation type="journal article" date="2001" name="J. Mol. Biol.">
        <title>Purification and characterization of the 1.0 MDa CCR4-NOT complex identifies two novel components of the complex.</title>
        <authorList>
            <person name="Chen J."/>
            <person name="Rappsilber J."/>
            <person name="Chiang Y.C."/>
            <person name="Russell P."/>
            <person name="Mann M."/>
            <person name="Denis C.L."/>
        </authorList>
    </citation>
    <scope>IDENTIFICATION IN THE CCR4-NOT CORE COMPLEX</scope>
    <scope>INTERACTION WITH NOT1</scope>
</reference>
<reference key="4">
    <citation type="journal article" date="2003" name="Nature">
        <title>Global analysis of protein expression in yeast.</title>
        <authorList>
            <person name="Ghaemmaghami S."/>
            <person name="Huh W.-K."/>
            <person name="Bower K."/>
            <person name="Howson R.W."/>
            <person name="Belle A."/>
            <person name="Dephoure N."/>
            <person name="O'Shea E.K."/>
            <person name="Weissman J.S."/>
        </authorList>
    </citation>
    <scope>LEVEL OF PROTEIN EXPRESSION [LARGE SCALE ANALYSIS]</scope>
</reference>
<gene>
    <name type="primary">CAF40</name>
    <name type="ordered locus">YNL288W</name>
    <name type="ORF">N0540</name>
</gene>
<feature type="chain" id="PRO_0000203375" description="Protein CAF40">
    <location>
        <begin position="1"/>
        <end position="373"/>
    </location>
</feature>
<feature type="region of interest" description="Disordered" evidence="1">
    <location>
        <begin position="1"/>
        <end position="91"/>
    </location>
</feature>
<feature type="compositionally biased region" description="Gly residues" evidence="1">
    <location>
        <begin position="11"/>
        <end position="22"/>
    </location>
</feature>
<feature type="compositionally biased region" description="Low complexity" evidence="1">
    <location>
        <begin position="50"/>
        <end position="88"/>
    </location>
</feature>